<dbReference type="EMBL" id="CR858468">
    <property type="protein sequence ID" value="CAH90696.1"/>
    <property type="molecule type" value="mRNA"/>
</dbReference>
<dbReference type="RefSeq" id="NP_001127323.1">
    <property type="nucleotide sequence ID" value="NM_001133851.2"/>
</dbReference>
<dbReference type="FunCoup" id="Q5RC14">
    <property type="interactions" value="462"/>
</dbReference>
<dbReference type="STRING" id="9601.ENSPPYP00000003803"/>
<dbReference type="GeneID" id="100174384"/>
<dbReference type="KEGG" id="pon:100174384"/>
<dbReference type="CTD" id="79096"/>
<dbReference type="eggNOG" id="ENOG502QRVN">
    <property type="taxonomic scope" value="Eukaryota"/>
</dbReference>
<dbReference type="HOGENOM" id="CLU_064579_0_0_1"/>
<dbReference type="InParanoid" id="Q5RC14"/>
<dbReference type="OrthoDB" id="197906at2759"/>
<dbReference type="TreeFam" id="TF329168"/>
<dbReference type="Proteomes" id="UP000001595">
    <property type="component" value="Chromosome 11"/>
</dbReference>
<dbReference type="GO" id="GO:0034451">
    <property type="term" value="C:centriolar satellite"/>
    <property type="evidence" value="ECO:0007669"/>
    <property type="project" value="UniProtKB-SubCell"/>
</dbReference>
<dbReference type="GO" id="GO:0005737">
    <property type="term" value="C:cytoplasm"/>
    <property type="evidence" value="ECO:0007669"/>
    <property type="project" value="UniProtKB-KW"/>
</dbReference>
<dbReference type="GO" id="GO:0005874">
    <property type="term" value="C:microtubule"/>
    <property type="evidence" value="ECO:0007669"/>
    <property type="project" value="UniProtKB-KW"/>
</dbReference>
<dbReference type="CDD" id="cd22959">
    <property type="entry name" value="DD_C11orf49"/>
    <property type="match status" value="1"/>
</dbReference>
<dbReference type="InterPro" id="IPR038968">
    <property type="entry name" value="CSTPP1"/>
</dbReference>
<dbReference type="PANTHER" id="PTHR34252:SF1">
    <property type="entry name" value="CENTRIOLAR SATELLITE-ASSOCIATED TUBULIN POLYGLUTAMYLASE COMPLEX REGULATOR 1"/>
    <property type="match status" value="1"/>
</dbReference>
<dbReference type="PANTHER" id="PTHR34252">
    <property type="entry name" value="UPF0705 PROTEIN C11ORF49"/>
    <property type="match status" value="1"/>
</dbReference>
<proteinExistence type="evidence at transcript level"/>
<protein>
    <recommendedName>
        <fullName>Centriolar satellite-associated tubulin polyglutamylase complex regulator 1</fullName>
    </recommendedName>
</protein>
<reference key="1">
    <citation type="submission" date="2004-11" db="EMBL/GenBank/DDBJ databases">
        <authorList>
            <consortium name="The German cDNA consortium"/>
        </authorList>
    </citation>
    <scope>NUCLEOTIDE SEQUENCE [LARGE SCALE MRNA]</scope>
    <source>
        <tissue>Kidney</tissue>
    </source>
</reference>
<name>CSTP1_PONAB</name>
<feature type="chain" id="PRO_0000281428" description="Centriolar satellite-associated tubulin polyglutamylase complex regulator 1">
    <location>
        <begin position="1"/>
        <end position="331"/>
    </location>
</feature>
<feature type="region of interest" description="Required for interaction with TPGS1, LRRC49, and TTLL1" evidence="2">
    <location>
        <begin position="1"/>
        <end position="225"/>
    </location>
</feature>
<feature type="region of interest" description="Required for interaction with PCM1" evidence="2">
    <location>
        <begin position="1"/>
        <end position="111"/>
    </location>
</feature>
<feature type="region of interest" description="Required for interaction with TPGS2" evidence="2">
    <location>
        <begin position="112"/>
        <end position="331"/>
    </location>
</feature>
<feature type="region of interest" description="Disordered" evidence="3">
    <location>
        <begin position="288"/>
        <end position="331"/>
    </location>
</feature>
<feature type="compositionally biased region" description="Acidic residues" evidence="3">
    <location>
        <begin position="318"/>
        <end position="331"/>
    </location>
</feature>
<feature type="modified residue" description="Phosphoserine" evidence="1">
    <location>
        <position position="319"/>
    </location>
</feature>
<organism>
    <name type="scientific">Pongo abelii</name>
    <name type="common">Sumatran orangutan</name>
    <name type="synonym">Pongo pygmaeus abelii</name>
    <dbReference type="NCBI Taxonomy" id="9601"/>
    <lineage>
        <taxon>Eukaryota</taxon>
        <taxon>Metazoa</taxon>
        <taxon>Chordata</taxon>
        <taxon>Craniata</taxon>
        <taxon>Vertebrata</taxon>
        <taxon>Euteleostomi</taxon>
        <taxon>Mammalia</taxon>
        <taxon>Eutheria</taxon>
        <taxon>Euarchontoglires</taxon>
        <taxon>Primates</taxon>
        <taxon>Haplorrhini</taxon>
        <taxon>Catarrhini</taxon>
        <taxon>Hominidae</taxon>
        <taxon>Pongo</taxon>
    </lineage>
</organism>
<gene>
    <name type="primary">CSTPP1</name>
</gene>
<accession>Q5RC14</accession>
<comment type="function">
    <text evidence="2">Regulator of the tubulin polyglutamylase complex (TPGC) that controls cytoskeletal organization, nuclear shape, and cilium disassembly by balancing microtubule and actin assembly. Regulates the assembly and stability of the TPGC and thereby modulates polyglutamylation of the microtubule, which antagonizes MAP4 binding.</text>
</comment>
<comment type="subunit">
    <text evidence="2">Interacts with PCM1. Interacts with TTLL1, TPGS1, TPGS2 and LRRC49; the interactions link CSTPP1 to the complex TPGC. Binds to alpha-tubulin.</text>
</comment>
<comment type="subcellular location">
    <subcellularLocation>
        <location evidence="2">Cytoplasm</location>
        <location evidence="2">Cytoskeleton</location>
        <location evidence="2">Microtubule organizing center</location>
        <location evidence="2">Centrosome</location>
        <location evidence="2">Centriolar satellite</location>
    </subcellularLocation>
    <subcellularLocation>
        <location evidence="2">Cytoplasm</location>
        <location evidence="2">Cytoskeleton</location>
    </subcellularLocation>
    <text evidence="2">Associated with microtubules.</text>
</comment>
<comment type="similarity">
    <text evidence="4">Belongs to the CSTPP1 family.</text>
</comment>
<keyword id="KW-0963">Cytoplasm</keyword>
<keyword id="KW-0206">Cytoskeleton</keyword>
<keyword id="KW-0493">Microtubule</keyword>
<keyword id="KW-0597">Phosphoprotein</keyword>
<keyword id="KW-1185">Reference proteome</keyword>
<sequence length="331" mass="37436">MLSPERLALPDYEYLAQRHVLTYMEDAVCQLLENREDISQYGIARFFTEYFNSVCQGTHILFREFSFVQATPHNRVSFLRAFWRCFRTVGKNGDLLTMKEYHCLLQLLCPDFPLELTQKAARIVLMDDAMDCLMSFSDFLFAFQIQFYYSEFLDSVAAIYENLLSGKNPNTVIVPTSSSGQHRQRPALGEAGMLEGVEASLFYQCLENLCDRHKYSCPPPALVKEALSNVQRLTFYGFLMALSKHHGINQALGALPDKGDLMHDPAMDEELERLLAQVPGLVNSVTASPEASCLPSRTPPRVGSPWRPLHHSRKVDGESDGSTEETDESET</sequence>
<evidence type="ECO:0000250" key="1">
    <source>
        <dbReference type="UniProtKB" id="Q8BHR8"/>
    </source>
</evidence>
<evidence type="ECO:0000250" key="2">
    <source>
        <dbReference type="UniProtKB" id="Q9H6J7"/>
    </source>
</evidence>
<evidence type="ECO:0000256" key="3">
    <source>
        <dbReference type="SAM" id="MobiDB-lite"/>
    </source>
</evidence>
<evidence type="ECO:0000305" key="4"/>